<proteinExistence type="inferred from homology"/>
<name>TMAR_VIBVU</name>
<reference key="1">
    <citation type="submission" date="2002-12" db="EMBL/GenBank/DDBJ databases">
        <title>Complete genome sequence of Vibrio vulnificus CMCP6.</title>
        <authorList>
            <person name="Rhee J.H."/>
            <person name="Kim S.Y."/>
            <person name="Chung S.S."/>
            <person name="Kim J.J."/>
            <person name="Moon Y.H."/>
            <person name="Jeong H."/>
            <person name="Choy H.E."/>
        </authorList>
    </citation>
    <scope>NUCLEOTIDE SEQUENCE [LARGE SCALE GENOMIC DNA]</scope>
    <source>
        <strain>CMCP6</strain>
    </source>
</reference>
<evidence type="ECO:0000255" key="1">
    <source>
        <dbReference type="HAMAP-Rule" id="MF_00683"/>
    </source>
</evidence>
<keyword id="KW-0175">Coiled coil</keyword>
<keyword id="KW-0963">Cytoplasm</keyword>
<feature type="chain" id="PRO_0000072772" description="Pole-localizer protein TmaR">
    <location>
        <begin position="1"/>
        <end position="104"/>
    </location>
</feature>
<feature type="coiled-coil region" evidence="1">
    <location>
        <begin position="13"/>
        <end position="43"/>
    </location>
</feature>
<feature type="coiled-coil region" evidence="1">
    <location>
        <begin position="76"/>
        <end position="96"/>
    </location>
</feature>
<sequence length="104" mass="12444">MNTVFEIVSQARRKNKLKRELLDNEKKVRDNRKRVELLENLLDYIKPNMSQDEIMTIIKNMKADYEDRVDDHIIKSAEISKARRDISRRIRELTEEDKQASGKK</sequence>
<dbReference type="EMBL" id="AE016796">
    <property type="protein sequence ID" value="AAO07689.1"/>
    <property type="molecule type" value="Genomic_DNA"/>
</dbReference>
<dbReference type="RefSeq" id="WP_011081685.1">
    <property type="nucleotide sequence ID" value="NC_004460.2"/>
</dbReference>
<dbReference type="SMR" id="Q8D5Z0"/>
<dbReference type="KEGG" id="vvu:VV2_0759"/>
<dbReference type="HOGENOM" id="CLU_153146_0_0_6"/>
<dbReference type="Proteomes" id="UP000002275">
    <property type="component" value="Chromosome 2"/>
</dbReference>
<dbReference type="GO" id="GO:0005829">
    <property type="term" value="C:cytosol"/>
    <property type="evidence" value="ECO:0007669"/>
    <property type="project" value="TreeGrafter"/>
</dbReference>
<dbReference type="HAMAP" id="MF_00683">
    <property type="entry name" value="Pole_loc_TmaR"/>
    <property type="match status" value="1"/>
</dbReference>
<dbReference type="InterPro" id="IPR007458">
    <property type="entry name" value="DUF496"/>
</dbReference>
<dbReference type="NCBIfam" id="NF003844">
    <property type="entry name" value="PRK05423.1"/>
    <property type="match status" value="1"/>
</dbReference>
<dbReference type="PANTHER" id="PTHR39591">
    <property type="entry name" value="UPF0265 PROTEIN YEEX"/>
    <property type="match status" value="1"/>
</dbReference>
<dbReference type="PANTHER" id="PTHR39591:SF1">
    <property type="entry name" value="UPF0265 PROTEIN YEEX"/>
    <property type="match status" value="1"/>
</dbReference>
<dbReference type="Pfam" id="PF04363">
    <property type="entry name" value="DUF496"/>
    <property type="match status" value="1"/>
</dbReference>
<dbReference type="PIRSF" id="PIRSF028773">
    <property type="entry name" value="UCP028773"/>
    <property type="match status" value="1"/>
</dbReference>
<gene>
    <name evidence="1" type="primary">tmaR</name>
    <name type="ordered locus">VV2_0759</name>
</gene>
<organism>
    <name type="scientific">Vibrio vulnificus (strain CMCP6)</name>
    <dbReference type="NCBI Taxonomy" id="216895"/>
    <lineage>
        <taxon>Bacteria</taxon>
        <taxon>Pseudomonadati</taxon>
        <taxon>Pseudomonadota</taxon>
        <taxon>Gammaproteobacteria</taxon>
        <taxon>Vibrionales</taxon>
        <taxon>Vibrionaceae</taxon>
        <taxon>Vibrio</taxon>
    </lineage>
</organism>
<protein>
    <recommendedName>
        <fullName evidence="1">Pole-localizer protein TmaR</fullName>
    </recommendedName>
</protein>
<accession>Q8D5Z0</accession>
<comment type="function">
    <text evidence="1">Pole-localizer protein involved in the regulation of several cellular processes.</text>
</comment>
<comment type="subcellular location">
    <subcellularLocation>
        <location evidence="1">Cytoplasm</location>
    </subcellularLocation>
</comment>
<comment type="similarity">
    <text evidence="1">Belongs to the pole-localizer TmaR family.</text>
</comment>